<reference key="1">
    <citation type="journal article" date="2002" name="Cell">
        <title>Sidekicks: synaptic adhesion molecules that promote lamina-specific connectivity in the retina.</title>
        <authorList>
            <person name="Yamagata M."/>
            <person name="Weiner J.A."/>
            <person name="Sanes J.R."/>
        </authorList>
    </citation>
    <scope>NUCLEOTIDE SEQUENCE [MRNA]</scope>
    <scope>FUNCTION</scope>
    <scope>SUBUNIT</scope>
    <scope>SUBCELLULAR LOCATION</scope>
    <scope>TISSUE SPECIFICITY</scope>
</reference>
<reference key="2">
    <citation type="journal article" date="2008" name="Nature">
        <title>Dscam and Sidekick proteins direct lamina-specific synaptic connections in vertebrate retina.</title>
        <authorList>
            <person name="Yamagata M."/>
            <person name="Sanes J.R."/>
        </authorList>
    </citation>
    <scope>FUNCTION</scope>
    <scope>SUBUNIT</scope>
    <scope>TISSUE SPECIFICITY</scope>
</reference>
<evidence type="ECO:0000250" key="1">
    <source>
        <dbReference type="UniProtKB" id="Q6V4S5"/>
    </source>
</evidence>
<evidence type="ECO:0000255" key="2"/>
<evidence type="ECO:0000255" key="3">
    <source>
        <dbReference type="PROSITE-ProRule" id="PRU00114"/>
    </source>
</evidence>
<evidence type="ECO:0000255" key="4">
    <source>
        <dbReference type="PROSITE-ProRule" id="PRU00316"/>
    </source>
</evidence>
<evidence type="ECO:0000256" key="5">
    <source>
        <dbReference type="SAM" id="MobiDB-lite"/>
    </source>
</evidence>
<evidence type="ECO:0000269" key="6">
    <source>
    </source>
</evidence>
<evidence type="ECO:0000269" key="7">
    <source>
    </source>
</evidence>
<evidence type="ECO:0000303" key="8">
    <source>
    </source>
</evidence>
<evidence type="ECO:0000305" key="9"/>
<protein>
    <recommendedName>
        <fullName evidence="8">Protein sidekick-2</fullName>
    </recommendedName>
</protein>
<keyword id="KW-0130">Cell adhesion</keyword>
<keyword id="KW-1003">Cell membrane</keyword>
<keyword id="KW-1015">Disulfide bond</keyword>
<keyword id="KW-0325">Glycoprotein</keyword>
<keyword id="KW-0393">Immunoglobulin domain</keyword>
<keyword id="KW-0472">Membrane</keyword>
<keyword id="KW-1185">Reference proteome</keyword>
<keyword id="KW-0677">Repeat</keyword>
<keyword id="KW-0732">Signal</keyword>
<keyword id="KW-0770">Synapse</keyword>
<keyword id="KW-0812">Transmembrane</keyword>
<keyword id="KW-1133">Transmembrane helix</keyword>
<name>SDK2_CHICK</name>
<proteinExistence type="evidence at protein level"/>
<feature type="signal peptide" evidence="2">
    <location>
        <begin position="1"/>
        <end position="26"/>
    </location>
</feature>
<feature type="chain" id="PRO_0000226980" description="Protein sidekick-2">
    <location>
        <begin position="27"/>
        <end position="2177"/>
    </location>
</feature>
<feature type="topological domain" description="Extracellular" evidence="2">
    <location>
        <begin position="27"/>
        <end position="1937"/>
    </location>
</feature>
<feature type="transmembrane region" description="Helical" evidence="2">
    <location>
        <begin position="1938"/>
        <end position="1958"/>
    </location>
</feature>
<feature type="topological domain" description="Cytoplasmic" evidence="2">
    <location>
        <begin position="1959"/>
        <end position="2177"/>
    </location>
</feature>
<feature type="domain" description="Ig-like C2-type 1">
    <location>
        <begin position="31"/>
        <end position="113"/>
    </location>
</feature>
<feature type="domain" description="Ig-like C2-type 2">
    <location>
        <begin position="118"/>
        <end position="205"/>
    </location>
</feature>
<feature type="domain" description="Ig-like C2-type 3">
    <location>
        <begin position="220"/>
        <end position="299"/>
    </location>
</feature>
<feature type="domain" description="Ig-like C2-type 4">
    <location>
        <begin position="313"/>
        <end position="401"/>
    </location>
</feature>
<feature type="domain" description="Ig-like C2-type 5">
    <location>
        <begin position="407"/>
        <end position="496"/>
    </location>
</feature>
<feature type="domain" description="Ig-like C2-type 6">
    <location>
        <begin position="501"/>
        <end position="590"/>
    </location>
</feature>
<feature type="domain" description="Fibronectin type-III 1" evidence="4">
    <location>
        <begin position="597"/>
        <end position="693"/>
    </location>
</feature>
<feature type="domain" description="Fibronectin type-III 2" evidence="4">
    <location>
        <begin position="698"/>
        <end position="794"/>
    </location>
</feature>
<feature type="domain" description="Fibronectin type-III 3" evidence="4">
    <location>
        <begin position="799"/>
        <end position="898"/>
    </location>
</feature>
<feature type="domain" description="Fibronectin type-III 4" evidence="4">
    <location>
        <begin position="902"/>
        <end position="996"/>
    </location>
</feature>
<feature type="domain" description="Fibronectin type-III 5" evidence="4">
    <location>
        <begin position="1000"/>
        <end position="1099"/>
    </location>
</feature>
<feature type="domain" description="Fibronectin type-III 6" evidence="4">
    <location>
        <begin position="1104"/>
        <end position="1202"/>
    </location>
</feature>
<feature type="domain" description="Fibronectin type-III 7" evidence="4">
    <location>
        <begin position="1207"/>
        <end position="1304"/>
    </location>
</feature>
<feature type="domain" description="Fibronectin type-III 8" evidence="4">
    <location>
        <begin position="1305"/>
        <end position="1402"/>
    </location>
</feature>
<feature type="domain" description="Fibronectin type-III 9" evidence="4">
    <location>
        <begin position="1407"/>
        <end position="1504"/>
    </location>
</feature>
<feature type="domain" description="Fibronectin type-III 10" evidence="4">
    <location>
        <begin position="1509"/>
        <end position="1626"/>
    </location>
</feature>
<feature type="domain" description="Fibronectin type-III 11" evidence="4">
    <location>
        <begin position="1631"/>
        <end position="1727"/>
    </location>
</feature>
<feature type="domain" description="Fibronectin type-III 12" evidence="4">
    <location>
        <begin position="1731"/>
        <end position="1826"/>
    </location>
</feature>
<feature type="domain" description="Fibronectin type-III 13" evidence="4">
    <location>
        <begin position="1829"/>
        <end position="1928"/>
    </location>
</feature>
<feature type="region of interest" description="Disordered" evidence="5">
    <location>
        <begin position="2044"/>
        <end position="2071"/>
    </location>
</feature>
<feature type="region of interest" description="Disordered" evidence="5">
    <location>
        <begin position="2103"/>
        <end position="2177"/>
    </location>
</feature>
<feature type="short sequence motif" description="PDZ-binding" evidence="1">
    <location>
        <begin position="2171"/>
        <end position="2177"/>
    </location>
</feature>
<feature type="compositionally biased region" description="Polar residues" evidence="5">
    <location>
        <begin position="2045"/>
        <end position="2063"/>
    </location>
</feature>
<feature type="compositionally biased region" description="Polar residues" evidence="5">
    <location>
        <begin position="2119"/>
        <end position="2130"/>
    </location>
</feature>
<feature type="compositionally biased region" description="Pro residues" evidence="5">
    <location>
        <begin position="2142"/>
        <end position="2151"/>
    </location>
</feature>
<feature type="glycosylation site" description="N-linked (GlcNAc...) asparagine" evidence="2">
    <location>
        <position position="198"/>
    </location>
</feature>
<feature type="glycosylation site" description="N-linked (GlcNAc...) asparagine" evidence="2">
    <location>
        <position position="228"/>
    </location>
</feature>
<feature type="glycosylation site" description="N-linked (GlcNAc...) asparagine" evidence="2">
    <location>
        <position position="408"/>
    </location>
</feature>
<feature type="glycosylation site" description="N-linked (GlcNAc...) asparagine" evidence="2">
    <location>
        <position position="582"/>
    </location>
</feature>
<feature type="glycosylation site" description="N-linked (GlcNAc...) asparagine" evidence="2">
    <location>
        <position position="614"/>
    </location>
</feature>
<feature type="glycosylation site" description="N-linked (GlcNAc...) asparagine" evidence="2">
    <location>
        <position position="709"/>
    </location>
</feature>
<feature type="glycosylation site" description="N-linked (GlcNAc...) asparagine" evidence="2">
    <location>
        <position position="748"/>
    </location>
</feature>
<feature type="glycosylation site" description="N-linked (GlcNAc...) asparagine" evidence="2">
    <location>
        <position position="809"/>
    </location>
</feature>
<feature type="glycosylation site" description="N-linked (GlcNAc...) asparagine" evidence="2">
    <location>
        <position position="941"/>
    </location>
</feature>
<feature type="glycosylation site" description="N-linked (GlcNAc...) asparagine" evidence="2">
    <location>
        <position position="953"/>
    </location>
</feature>
<feature type="glycosylation site" description="N-linked (GlcNAc...) asparagine" evidence="2">
    <location>
        <position position="1107"/>
    </location>
</feature>
<feature type="glycosylation site" description="N-linked (GlcNAc...) asparagine" evidence="2">
    <location>
        <position position="1210"/>
    </location>
</feature>
<feature type="glycosylation site" description="N-linked (GlcNAc...) asparagine" evidence="2">
    <location>
        <position position="1261"/>
    </location>
</feature>
<feature type="glycosylation site" description="N-linked (GlcNAc...) asparagine" evidence="2">
    <location>
        <position position="1346"/>
    </location>
</feature>
<feature type="glycosylation site" description="N-linked (GlcNAc...) asparagine" evidence="2">
    <location>
        <position position="1462"/>
    </location>
</feature>
<feature type="glycosylation site" description="N-linked (GlcNAc...) asparagine" evidence="2">
    <location>
        <position position="1580"/>
    </location>
</feature>
<feature type="glycosylation site" description="N-linked (GlcNAc...) asparagine" evidence="2">
    <location>
        <position position="1593"/>
    </location>
</feature>
<feature type="glycosylation site" description="N-linked (GlcNAc...) asparagine" evidence="2">
    <location>
        <position position="1675"/>
    </location>
</feature>
<feature type="glycosylation site" description="N-linked (GlcNAc...) asparagine" evidence="2">
    <location>
        <position position="1694"/>
    </location>
</feature>
<feature type="glycosylation site" description="N-linked (GlcNAc...) asparagine" evidence="2">
    <location>
        <position position="1746"/>
    </location>
</feature>
<feature type="glycosylation site" description="N-linked (GlcNAc...) asparagine" evidence="2">
    <location>
        <position position="1820"/>
    </location>
</feature>
<feature type="disulfide bond" evidence="3">
    <location>
        <begin position="53"/>
        <end position="96"/>
    </location>
</feature>
<feature type="disulfide bond" evidence="3">
    <location>
        <begin position="242"/>
        <end position="289"/>
    </location>
</feature>
<feature type="disulfide bond" evidence="3">
    <location>
        <begin position="335"/>
        <end position="385"/>
    </location>
</feature>
<feature type="disulfide bond" evidence="3">
    <location>
        <begin position="428"/>
        <end position="480"/>
    </location>
</feature>
<feature type="disulfide bond" evidence="3">
    <location>
        <begin position="522"/>
        <end position="574"/>
    </location>
</feature>
<comment type="function">
    <text evidence="6 7">Adhesion molecule that promotes lamina-specific synaptic connections in the retina (PubMed:12230981, PubMed:18216854). Expressed in specific subsets of interneurons and retinal ganglion cells (RGCs) and promotes synaptic connectivity via homophilic interactions (PubMed:12230981, PubMed:18216854).</text>
</comment>
<comment type="subunit">
    <text evidence="6">Homodimer; mediates homophilic interactions to promote cell adhesion.</text>
</comment>
<comment type="subcellular location">
    <subcellularLocation>
        <location evidence="9">Cell membrane</location>
        <topology evidence="9">Single-pass type I membrane protein</topology>
    </subcellularLocation>
    <subcellularLocation>
        <location evidence="6">Synapse</location>
    </subcellularLocation>
</comment>
<comment type="tissue specificity">
    <text evidence="6 7">Expressed by non-overlapping subsets of retinal neurons (PubMed:12230981). SDK1, SDK2, DSCAM and DSCAML1 are expressed in non-overlapping subsets of interneurons and retinal ganglion cells (RGCs) that form synapses in distinct inner plexiform layer (IPL) sublaminae (PubMed:18216854).</text>
</comment>
<comment type="domain">
    <text evidence="1">The PDZ-binding motif mediates interaction with PDZ domain-containing proteins and is required for is required for synaptic localization in photoreceptors.</text>
</comment>
<comment type="similarity">
    <text evidence="9">Belongs to the sidekick family.</text>
</comment>
<comment type="sequence caution" evidence="9">
    <conflict type="erroneous initiation">
        <sequence resource="EMBL-CDS" id="AAN15076"/>
    </conflict>
</comment>
<sequence length="2177" mass="239152">MKGLGVPAAALLWGGLSALLPPSLPADDVSPYFKTEPVRSQVHLEGNRLVLTCMAEGSWPLEFKWLHNSRELTKFSLEYRYMITSLDRTHAGFYRCIVRNRMGALLQRQTEVQVAYMGSFEDSETQQSVSHGEAAVIRAPRIASFPQPQVTWFRDGRKISPSSRIAITLENTLVILSTVAPDAGRYYVQAVNDKNGDNKTSQPITLTVANVGGPADPIAPTIIVPPRNTSVVAGTSEVTMECVANARPLIKLHIIWKKDGVPISSGISDYSRRLTILNPTLGDSGYYECEAVLRSSSVPAVAEGAYLSVLEPPQFVKEPERHITAEMEKVVAIPCQAKGVPPPDMAWYKDASLIHPEQLSRFQLLADGSLQISGLLPDDTGMFQCFARNAAGEVQTTTYLAVTSIAPNITRGPQDSTVIDGMSVILNCETSGAPRPAITWQKGERILASGSVQLPRFTLLESGSLLVSPAHLTDAGTYTCLATNSRGVDEASADLVVWARTRITDPPQDQSVIKGTKASMSCGVTHDPSVDVRYIWEKDGAPLGTESGPRLRLDETGTLHISQTWSGDIGTYTCKVLSAGGNDSRSAHLRVRQLPHAPESPVAVLSPLEKRAINLTWAKPFDGNSPLLRYLVEISENNAPWTVLLASVDPELTWVVVRGLVPARSYQFRLCAVNDVGRSQFSKDTERVSLPEEPPFAPPQNVIASGRTNQSIMIQWQPPPESHQNGVLKGYIIRYCLAGLPVGYQFKNITNADVNNLLLEDLIIWTNYEIEVAAYNSAGLGVYSMKVTEWTLQGVPTVPPGNVQTEATNSTTIRFTWNPPSPQFINGINQGYKLIAWEPEHEEEATVVTVRPNFQDSVHVGYVVGLKKFTEYLTSVLCFTTPGDGPRSPPQLVRTHEDVPGPVGHLSFSEILDTSLKVSWQEPLEKNGILTGYRISWEEYNRTNTRVTHYLPNVTLEYRVTGLTALTTYTIEVAAMTSKGQGQVSSSTISSGVPPELPGAPTNLGISNIGPRSVTLQFRPGYDGKTSISRWQVEAQVGQNGEAEEWGLVHQLANEPDARSLEVPNLNPYTYYSFRMRQVNIVGTSPPSLPSRRIQTLQAPPDVAPANVTLRTASETSLWLRWMPLLEQEYNGNPDSVGYRIRYLRSDGQGRAVVHVIHDRVEREYTIEDLEEWTEYRVQVQAFNAIGSGPWSHLVLGRTRESVPSSGPSNVSAQATSSSNMLVRWSDIPEADCNGLILGYKVMFKEKDSEARAQFWLAEGNTSRSAQLTGLGKFMLYEIRVLAFTRIGDGVPSRPPILERTLDDVPGPPVGMLFPEVRTTSVRLIWQPPTAPNGIILAYQLTHRLNTTTANAAVSEVLGPSTRQYTATGLQPEATYLFSITAQTRKGWGEAAEALVVTTEKRDRPQPPSKPLVRQEDVRARSVLLSWEPGSDGLSPVRFYTVQTRELPSGEWALHPASISHNATAFVVDRLKPFTSYKFRVKATNDIGDSEYSEESESLTTLQAAPEEAPTILSVTPHTTTSVLIRWQPPSEDKINGILLGFRLRYRELLYDSLRGFTLHGIGNPGATWAELTPVYAVHNLSEVSLTQYELDNLSKHRRYEIRMSVYNAVGEGPPSPPQEVFVGEAMPTGAPQNVAVKAATATQLDVTWEPPPTESQNGDIQGYKIHFWEAQRQNESARVKTLFLPETGVKLKNLTGYTSYWVSIAAFNAAGDGPRSTPVTARTQQAAPSAPGSIRFSELTTTSVNVSWEPPPLPNGILEGYRLVYEPCMPVDGVSKIVTVDVKGNSPLWMKVKDLAEGITYRFRIRAKTFAYGPDVEANITTGPGEGAPGPPGEPFISRYGSAITIHWTSGDPGQGPITRYVIEARPSDEGLWDILIKDIPKEVTSYTFSMDILKQGVSYDFRVIAVNDYGYGTPSTPSPSVSAQKANPFYEEWWFLVVIALVGLIFILLLVFVLIIRGQSKKYAKKSDSGNGSKANALTHGEMVSLDESSFPALELNNRRLSVKNSFCRKNGIYTRSPPRPSPGSLHYSDEDVTKYNDLIPAESSSLTEKPSEVSDSQGSDSEYEVDPAHQKAHSFVNHYISDPTYYNSWRRQQKGISRAQAYSYTESDSGEPDHTPLSNSTSTQQGSLFRPKASRIPTPQTPGNPPSQPGTLYRPPSSLAPGSRAPIGGFSSFV</sequence>
<accession>Q8AV57</accession>
<dbReference type="EMBL" id="AF537108">
    <property type="protein sequence ID" value="AAN15076.1"/>
    <property type="status" value="ALT_INIT"/>
    <property type="molecule type" value="mRNA"/>
</dbReference>
<dbReference type="SMR" id="Q8AV57"/>
<dbReference type="FunCoup" id="Q8AV57">
    <property type="interactions" value="729"/>
</dbReference>
<dbReference type="STRING" id="9031.ENSGALP00000064562"/>
<dbReference type="GlyCosmos" id="Q8AV57">
    <property type="glycosylation" value="21 sites, No reported glycans"/>
</dbReference>
<dbReference type="GlyGen" id="Q8AV57">
    <property type="glycosylation" value="22 sites"/>
</dbReference>
<dbReference type="PaxDb" id="9031-ENSGALP00000007092"/>
<dbReference type="VEuPathDB" id="HostDB:geneid_395215"/>
<dbReference type="eggNOG" id="KOG3510">
    <property type="taxonomic scope" value="Eukaryota"/>
</dbReference>
<dbReference type="InParanoid" id="Q8AV57"/>
<dbReference type="OrthoDB" id="8923679at2759"/>
<dbReference type="PhylomeDB" id="Q8AV57"/>
<dbReference type="Proteomes" id="UP000000539">
    <property type="component" value="Unassembled WGS sequence"/>
</dbReference>
<dbReference type="GO" id="GO:0005886">
    <property type="term" value="C:plasma membrane"/>
    <property type="evidence" value="ECO:0007669"/>
    <property type="project" value="UniProtKB-SubCell"/>
</dbReference>
<dbReference type="GO" id="GO:0045202">
    <property type="term" value="C:synapse"/>
    <property type="evidence" value="ECO:0000314"/>
    <property type="project" value="UniProtKB"/>
</dbReference>
<dbReference type="GO" id="GO:0042802">
    <property type="term" value="F:identical protein binding"/>
    <property type="evidence" value="ECO:0000314"/>
    <property type="project" value="UniProtKB"/>
</dbReference>
<dbReference type="GO" id="GO:0060219">
    <property type="term" value="P:camera-type eye photoreceptor cell differentiation"/>
    <property type="evidence" value="ECO:0000250"/>
    <property type="project" value="UniProtKB"/>
</dbReference>
<dbReference type="GO" id="GO:0007156">
    <property type="term" value="P:homophilic cell adhesion via plasma membrane adhesion molecules"/>
    <property type="evidence" value="ECO:0000314"/>
    <property type="project" value="UniProtKB"/>
</dbReference>
<dbReference type="GO" id="GO:0010842">
    <property type="term" value="P:retina layer formation"/>
    <property type="evidence" value="ECO:0000314"/>
    <property type="project" value="UniProtKB"/>
</dbReference>
<dbReference type="GO" id="GO:0007416">
    <property type="term" value="P:synapse assembly"/>
    <property type="evidence" value="ECO:0000314"/>
    <property type="project" value="UniProtKB"/>
</dbReference>
<dbReference type="CDD" id="cd00063">
    <property type="entry name" value="FN3"/>
    <property type="match status" value="13"/>
</dbReference>
<dbReference type="FunFam" id="2.60.40.10:FF:000202">
    <property type="entry name" value="Sidekick cell adhesion molecule 1"/>
    <property type="match status" value="1"/>
</dbReference>
<dbReference type="FunFam" id="2.60.40.10:FF:000253">
    <property type="entry name" value="Sidekick cell adhesion molecule 1"/>
    <property type="match status" value="1"/>
</dbReference>
<dbReference type="FunFam" id="2.60.40.10:FF:000158">
    <property type="entry name" value="Sidekick cell adhesion molecule 2"/>
    <property type="match status" value="1"/>
</dbReference>
<dbReference type="FunFam" id="2.60.40.10:FF:000177">
    <property type="entry name" value="Sidekick cell adhesion molecule 2"/>
    <property type="match status" value="1"/>
</dbReference>
<dbReference type="FunFam" id="2.60.40.10:FF:000206">
    <property type="entry name" value="Sidekick cell adhesion molecule 2"/>
    <property type="match status" value="1"/>
</dbReference>
<dbReference type="FunFam" id="2.60.40.10:FF:000209">
    <property type="entry name" value="Sidekick cell adhesion molecule 2"/>
    <property type="match status" value="1"/>
</dbReference>
<dbReference type="FunFam" id="2.60.40.10:FF:000231">
    <property type="entry name" value="Sidekick cell adhesion molecule 2"/>
    <property type="match status" value="1"/>
</dbReference>
<dbReference type="FunFam" id="2.60.40.10:FF:000236">
    <property type="entry name" value="Sidekick cell adhesion molecule 2"/>
    <property type="match status" value="1"/>
</dbReference>
<dbReference type="FunFam" id="2.60.40.10:FF:000237">
    <property type="entry name" value="Sidekick cell adhesion molecule 2"/>
    <property type="match status" value="1"/>
</dbReference>
<dbReference type="FunFam" id="2.60.40.10:FF:000261">
    <property type="entry name" value="Sidekick cell adhesion molecule 2"/>
    <property type="match status" value="1"/>
</dbReference>
<dbReference type="FunFam" id="2.60.40.10:FF:000266">
    <property type="entry name" value="Sidekick cell adhesion molecule 2"/>
    <property type="match status" value="1"/>
</dbReference>
<dbReference type="FunFam" id="2.60.40.10:FF:000267">
    <property type="entry name" value="Sidekick cell adhesion molecule 2"/>
    <property type="match status" value="1"/>
</dbReference>
<dbReference type="FunFam" id="2.60.40.10:FF:000271">
    <property type="entry name" value="Sidekick cell adhesion molecule 2"/>
    <property type="match status" value="1"/>
</dbReference>
<dbReference type="FunFam" id="2.60.40.10:FF:000301">
    <property type="entry name" value="Sidekick cell adhesion molecule 2"/>
    <property type="match status" value="1"/>
</dbReference>
<dbReference type="FunFam" id="2.60.40.10:FF:000359">
    <property type="entry name" value="Sidekick cell adhesion molecule 2"/>
    <property type="match status" value="1"/>
</dbReference>
<dbReference type="FunFam" id="2.60.40.10:FF:000360">
    <property type="entry name" value="Sidekick cell adhesion molecule 2"/>
    <property type="match status" value="1"/>
</dbReference>
<dbReference type="FunFam" id="2.60.40.10:FF:000420">
    <property type="entry name" value="Sidekick cell adhesion molecule 2"/>
    <property type="match status" value="1"/>
</dbReference>
<dbReference type="FunFam" id="2.60.40.10:FF:000434">
    <property type="entry name" value="Sidekick cell adhesion molecule 2"/>
    <property type="match status" value="1"/>
</dbReference>
<dbReference type="FunFam" id="2.60.40.10:FF:000485">
    <property type="entry name" value="Sidekick cell adhesion molecule 2"/>
    <property type="match status" value="1"/>
</dbReference>
<dbReference type="Gene3D" id="2.60.40.10">
    <property type="entry name" value="Immunoglobulins"/>
    <property type="match status" value="19"/>
</dbReference>
<dbReference type="InterPro" id="IPR003961">
    <property type="entry name" value="FN3_dom"/>
</dbReference>
<dbReference type="InterPro" id="IPR036116">
    <property type="entry name" value="FN3_sf"/>
</dbReference>
<dbReference type="InterPro" id="IPR007110">
    <property type="entry name" value="Ig-like_dom"/>
</dbReference>
<dbReference type="InterPro" id="IPR036179">
    <property type="entry name" value="Ig-like_dom_sf"/>
</dbReference>
<dbReference type="InterPro" id="IPR013783">
    <property type="entry name" value="Ig-like_fold"/>
</dbReference>
<dbReference type="InterPro" id="IPR013098">
    <property type="entry name" value="Ig_I-set"/>
</dbReference>
<dbReference type="InterPro" id="IPR003599">
    <property type="entry name" value="Ig_sub"/>
</dbReference>
<dbReference type="InterPro" id="IPR003598">
    <property type="entry name" value="Ig_sub2"/>
</dbReference>
<dbReference type="PANTHER" id="PTHR44170:SF6">
    <property type="entry name" value="CONTACTIN"/>
    <property type="match status" value="1"/>
</dbReference>
<dbReference type="PANTHER" id="PTHR44170">
    <property type="entry name" value="PROTEIN SIDEKICK"/>
    <property type="match status" value="1"/>
</dbReference>
<dbReference type="Pfam" id="PF00041">
    <property type="entry name" value="fn3"/>
    <property type="match status" value="13"/>
</dbReference>
<dbReference type="Pfam" id="PF07679">
    <property type="entry name" value="I-set"/>
    <property type="match status" value="4"/>
</dbReference>
<dbReference type="Pfam" id="PF13927">
    <property type="entry name" value="Ig_3"/>
    <property type="match status" value="2"/>
</dbReference>
<dbReference type="PRINTS" id="PR00014">
    <property type="entry name" value="FNTYPEIII"/>
</dbReference>
<dbReference type="SMART" id="SM00060">
    <property type="entry name" value="FN3"/>
    <property type="match status" value="13"/>
</dbReference>
<dbReference type="SMART" id="SM00409">
    <property type="entry name" value="IG"/>
    <property type="match status" value="6"/>
</dbReference>
<dbReference type="SMART" id="SM00408">
    <property type="entry name" value="IGc2"/>
    <property type="match status" value="6"/>
</dbReference>
<dbReference type="SUPFAM" id="SSF49265">
    <property type="entry name" value="Fibronectin type III"/>
    <property type="match status" value="7"/>
</dbReference>
<dbReference type="SUPFAM" id="SSF48726">
    <property type="entry name" value="Immunoglobulin"/>
    <property type="match status" value="5"/>
</dbReference>
<dbReference type="PROSITE" id="PS50853">
    <property type="entry name" value="FN3"/>
    <property type="match status" value="13"/>
</dbReference>
<dbReference type="PROSITE" id="PS50835">
    <property type="entry name" value="IG_LIKE"/>
    <property type="match status" value="6"/>
</dbReference>
<organism>
    <name type="scientific">Gallus gallus</name>
    <name type="common">Chicken</name>
    <dbReference type="NCBI Taxonomy" id="9031"/>
    <lineage>
        <taxon>Eukaryota</taxon>
        <taxon>Metazoa</taxon>
        <taxon>Chordata</taxon>
        <taxon>Craniata</taxon>
        <taxon>Vertebrata</taxon>
        <taxon>Euteleostomi</taxon>
        <taxon>Archelosauria</taxon>
        <taxon>Archosauria</taxon>
        <taxon>Dinosauria</taxon>
        <taxon>Saurischia</taxon>
        <taxon>Theropoda</taxon>
        <taxon>Coelurosauria</taxon>
        <taxon>Aves</taxon>
        <taxon>Neognathae</taxon>
        <taxon>Galloanserae</taxon>
        <taxon>Galliformes</taxon>
        <taxon>Phasianidae</taxon>
        <taxon>Phasianinae</taxon>
        <taxon>Gallus</taxon>
    </lineage>
</organism>
<gene>
    <name evidence="8" type="primary">SDK2</name>
</gene>